<reference key="1">
    <citation type="journal article" date="1998" name="Science">
        <title>Genome sequence of the nematode C. elegans: a platform for investigating biology.</title>
        <authorList>
            <consortium name="The C. elegans sequencing consortium"/>
        </authorList>
    </citation>
    <scope>NUCLEOTIDE SEQUENCE [LARGE SCALE GENOMIC DNA]</scope>
    <source>
        <strain>Bristol N2</strain>
    </source>
</reference>
<reference key="2">
    <citation type="journal article" date="2002" name="Curr. Biol.">
        <title>The Caenorhabditis elegans Skp1-related gene family: diverse functions in cell proliferation, morphogenesis, and meiosis.</title>
        <authorList>
            <person name="Nayak S."/>
            <person name="Santiago F.E."/>
            <person name="Jin H."/>
            <person name="Lin D."/>
            <person name="Schedl T."/>
            <person name="Kipreos E.T."/>
        </authorList>
    </citation>
    <scope>INTERACTION WITH SKR-3</scope>
</reference>
<proteinExistence type="evidence at protein level"/>
<organism>
    <name type="scientific">Caenorhabditis elegans</name>
    <dbReference type="NCBI Taxonomy" id="6239"/>
    <lineage>
        <taxon>Eukaryota</taxon>
        <taxon>Metazoa</taxon>
        <taxon>Ecdysozoa</taxon>
        <taxon>Nematoda</taxon>
        <taxon>Chromadorea</taxon>
        <taxon>Rhabditida</taxon>
        <taxon>Rhabditina</taxon>
        <taxon>Rhabditomorpha</taxon>
        <taxon>Rhabditoidea</taxon>
        <taxon>Rhabditidae</taxon>
        <taxon>Peloderinae</taxon>
        <taxon>Caenorhabditis</taxon>
    </lineage>
</organism>
<keyword id="KW-1017">Isopeptide bond</keyword>
<keyword id="KW-1185">Reference proteome</keyword>
<keyword id="KW-0832">Ubl conjugation</keyword>
<keyword id="KW-0833">Ubl conjugation pathway</keyword>
<protein>
    <recommendedName>
        <fullName>Cullin-6</fullName>
    </recommendedName>
</protein>
<feature type="chain" id="PRO_0000119785" description="Cullin-6">
    <location>
        <begin position="1"/>
        <end position="729"/>
    </location>
</feature>
<feature type="domain" description="Cullin neddylation" evidence="3">
    <location>
        <begin position="659"/>
        <end position="720"/>
    </location>
</feature>
<feature type="cross-link" description="Glycyl lysine isopeptide (Lys-Gly) (interchain with G-Cter in NEDD8)" evidence="1">
    <location>
        <position position="673"/>
    </location>
</feature>
<comment type="function">
    <text>Probable core component of cullin-based SCF-like E3 ubiquitin-protein ligase complexes which mediate the ubiquitination and subsequent proteasomal degradation of target proteins.</text>
</comment>
<comment type="subunit">
    <text evidence="5">Probably interacts with skr-3.</text>
</comment>
<comment type="PTM">
    <text evidence="2">Neddylated; which enhances the ubiquitination activity of SCF-like complex.</text>
</comment>
<comment type="similarity">
    <text evidence="4">Belongs to the cullin family.</text>
</comment>
<name>CUL6_CAEEL</name>
<evidence type="ECO:0000250" key="1">
    <source>
        <dbReference type="UniProtKB" id="Q13616"/>
    </source>
</evidence>
<evidence type="ECO:0000250" key="2">
    <source>
        <dbReference type="UniProtKB" id="Q93034"/>
    </source>
</evidence>
<evidence type="ECO:0000255" key="3"/>
<evidence type="ECO:0000255" key="4">
    <source>
        <dbReference type="PROSITE-ProRule" id="PRU00330"/>
    </source>
</evidence>
<evidence type="ECO:0000269" key="5">
    <source>
    </source>
</evidence>
<dbReference type="EMBL" id="Z77666">
    <property type="protein sequence ID" value="CAB01230.1"/>
    <property type="molecule type" value="Genomic_DNA"/>
</dbReference>
<dbReference type="PIR" id="T23474">
    <property type="entry name" value="T23474"/>
</dbReference>
<dbReference type="RefSeq" id="NP_502412.1">
    <property type="nucleotide sequence ID" value="NM_070011.5"/>
</dbReference>
<dbReference type="SMR" id="Q21346"/>
<dbReference type="BioGRID" id="43306">
    <property type="interactions" value="2"/>
</dbReference>
<dbReference type="FunCoup" id="Q21346">
    <property type="interactions" value="1586"/>
</dbReference>
<dbReference type="STRING" id="6239.K08E7.7a.1"/>
<dbReference type="PaxDb" id="6239-K08E7.7"/>
<dbReference type="PeptideAtlas" id="Q21346"/>
<dbReference type="EnsemblMetazoa" id="K08E7.7a.1">
    <property type="protein sequence ID" value="K08E7.7a.1"/>
    <property type="gene ID" value="WBGene00000841"/>
</dbReference>
<dbReference type="GeneID" id="178214"/>
<dbReference type="KEGG" id="cel:CELE_K08E7.7"/>
<dbReference type="UCSC" id="K08E7.7">
    <property type="organism name" value="c. elegans"/>
</dbReference>
<dbReference type="AGR" id="WB:WBGene00000841"/>
<dbReference type="CTD" id="178214"/>
<dbReference type="WormBase" id="K08E7.7a">
    <property type="protein sequence ID" value="CE11928"/>
    <property type="gene ID" value="WBGene00000841"/>
    <property type="gene designation" value="cul-6"/>
</dbReference>
<dbReference type="eggNOG" id="KOG2166">
    <property type="taxonomic scope" value="Eukaryota"/>
</dbReference>
<dbReference type="GeneTree" id="ENSGT00940000154774"/>
<dbReference type="HOGENOM" id="CLU_004747_6_1_1"/>
<dbReference type="InParanoid" id="Q21346"/>
<dbReference type="OMA" id="PFEESCT"/>
<dbReference type="OrthoDB" id="27073at2759"/>
<dbReference type="PhylomeDB" id="Q21346"/>
<dbReference type="PRO" id="PR:Q21346"/>
<dbReference type="Proteomes" id="UP000001940">
    <property type="component" value="Chromosome IV"/>
</dbReference>
<dbReference type="Bgee" id="WBGene00000841">
    <property type="expression patterns" value="Expressed in pharyngeal muscle cell (C elegans) and 3 other cell types or tissues"/>
</dbReference>
<dbReference type="GO" id="GO:0019005">
    <property type="term" value="C:SCF ubiquitin ligase complex"/>
    <property type="evidence" value="ECO:0000318"/>
    <property type="project" value="GO_Central"/>
</dbReference>
<dbReference type="GO" id="GO:0030674">
    <property type="term" value="F:protein-macromolecule adaptor activity"/>
    <property type="evidence" value="ECO:0000318"/>
    <property type="project" value="GO_Central"/>
</dbReference>
<dbReference type="GO" id="GO:0031625">
    <property type="term" value="F:ubiquitin protein ligase binding"/>
    <property type="evidence" value="ECO:0000318"/>
    <property type="project" value="GO_Central"/>
</dbReference>
<dbReference type="GO" id="GO:0051607">
    <property type="term" value="P:defense response to virus"/>
    <property type="evidence" value="ECO:0000315"/>
    <property type="project" value="WormBase"/>
</dbReference>
<dbReference type="GO" id="GO:0016567">
    <property type="term" value="P:protein ubiquitination"/>
    <property type="evidence" value="ECO:0000318"/>
    <property type="project" value="GO_Central"/>
</dbReference>
<dbReference type="GO" id="GO:0031146">
    <property type="term" value="P:SCF-dependent proteasomal ubiquitin-dependent protein catabolic process"/>
    <property type="evidence" value="ECO:0000318"/>
    <property type="project" value="GO_Central"/>
</dbReference>
<dbReference type="FunFam" id="1.10.10.10:FF:000014">
    <property type="entry name" value="Cullin 1"/>
    <property type="match status" value="1"/>
</dbReference>
<dbReference type="FunFam" id="1.20.1310.10:FF:000019">
    <property type="entry name" value="Cullin 1"/>
    <property type="match status" value="1"/>
</dbReference>
<dbReference type="FunFam" id="3.30.230.130:FF:000003">
    <property type="entry name" value="Cullin 2"/>
    <property type="match status" value="1"/>
</dbReference>
<dbReference type="FunFam" id="1.20.1310.10:FF:000001">
    <property type="entry name" value="Cullin 3"/>
    <property type="match status" value="1"/>
</dbReference>
<dbReference type="Gene3D" id="1.20.1310.10">
    <property type="entry name" value="Cullin Repeats"/>
    <property type="match status" value="4"/>
</dbReference>
<dbReference type="Gene3D" id="3.30.230.130">
    <property type="entry name" value="Cullin, Chain C, Domain 2"/>
    <property type="match status" value="1"/>
</dbReference>
<dbReference type="Gene3D" id="1.10.10.10">
    <property type="entry name" value="Winged helix-like DNA-binding domain superfamily/Winged helix DNA-binding domain"/>
    <property type="match status" value="1"/>
</dbReference>
<dbReference type="InterPro" id="IPR045093">
    <property type="entry name" value="Cullin"/>
</dbReference>
<dbReference type="InterPro" id="IPR016157">
    <property type="entry name" value="Cullin_CS"/>
</dbReference>
<dbReference type="InterPro" id="IPR016158">
    <property type="entry name" value="Cullin_homology"/>
</dbReference>
<dbReference type="InterPro" id="IPR036317">
    <property type="entry name" value="Cullin_homology_sf"/>
</dbReference>
<dbReference type="InterPro" id="IPR001373">
    <property type="entry name" value="Cullin_N"/>
</dbReference>
<dbReference type="InterPro" id="IPR019559">
    <property type="entry name" value="Cullin_neddylation_domain"/>
</dbReference>
<dbReference type="InterPro" id="IPR016159">
    <property type="entry name" value="Cullin_repeat-like_dom_sf"/>
</dbReference>
<dbReference type="InterPro" id="IPR036388">
    <property type="entry name" value="WH-like_DNA-bd_sf"/>
</dbReference>
<dbReference type="InterPro" id="IPR036390">
    <property type="entry name" value="WH_DNA-bd_sf"/>
</dbReference>
<dbReference type="PANTHER" id="PTHR11932">
    <property type="entry name" value="CULLIN"/>
    <property type="match status" value="1"/>
</dbReference>
<dbReference type="Pfam" id="PF00888">
    <property type="entry name" value="Cullin"/>
    <property type="match status" value="1"/>
</dbReference>
<dbReference type="Pfam" id="PF10557">
    <property type="entry name" value="Cullin_Nedd8"/>
    <property type="match status" value="1"/>
</dbReference>
<dbReference type="SMART" id="SM00182">
    <property type="entry name" value="CULLIN"/>
    <property type="match status" value="1"/>
</dbReference>
<dbReference type="SMART" id="SM00884">
    <property type="entry name" value="Cullin_Nedd8"/>
    <property type="match status" value="1"/>
</dbReference>
<dbReference type="SUPFAM" id="SSF75632">
    <property type="entry name" value="Cullin homology domain"/>
    <property type="match status" value="1"/>
</dbReference>
<dbReference type="SUPFAM" id="SSF74788">
    <property type="entry name" value="Cullin repeat-like"/>
    <property type="match status" value="1"/>
</dbReference>
<dbReference type="SUPFAM" id="SSF46785">
    <property type="entry name" value="Winged helix' DNA-binding domain"/>
    <property type="match status" value="1"/>
</dbReference>
<dbReference type="PROSITE" id="PS01256">
    <property type="entry name" value="CULLIN_1"/>
    <property type="match status" value="1"/>
</dbReference>
<dbReference type="PROSITE" id="PS50069">
    <property type="entry name" value="CULLIN_2"/>
    <property type="match status" value="1"/>
</dbReference>
<sequence>MSIEAVWGTLQDGLNLLYRREHMSKKYYMMLYDAVYNICTTTTLANSNNNSPEFASEFLYKQLENYIRTYVIAIRDRISACSGDELLGKCTIEWDNFKFSTRICNCIFQYLNRNFVSKKVEDKNGEIVEIYKLALDIWKAEFFDNFKVKTIDAILELILLERCGSTINSTHISSVVECLTELDIYKVSFEPQFLDATKLFYKQEVLNSKETVIEYMITVENRLFQEEYRSRRYLGPSTNDLLIDSCESILISDRLKFLHSEFERLLEARKDEHLTRMYSLCRRVTHGLEDLRVYLEKRILKEGHETLQRLAKDSGLKTTPKEYITKLLEVHEIYFNLINKAFDRNALFMQSLDKASKDFIEANAVTMLAPEKHRSTRSADYLARYCDQLLKKNSKVQDETALDKALTVLKYISEKDVFQLYYQNWFSERIINNSSASDDAEEKFITNLTATEGLEYTRNLVKMVEDAKISKDLTTEFKDIKTEKSIDFNVILQTTGAWPSLDQIKIILPRELSTILKEFDTFYNASHNGRRLNWAYSQCRGEVNSKAFEKKYVFIVTASQLCTLYLFNEQDSFTIEQISKAIEMTAKSTSAIVGSLNPVIDPVLVVDKGNEKDGYPPDAVVSLNTKYANKKVRVDLTTAIKKATADRETDAVQNTVESDRKYEIKACIVRIMKTRKSLTHTLLINEIISQLKSRFTPNVQMIKICIEILIEQLYIRRSENEHNVYEYLA</sequence>
<accession>Q21346</accession>
<gene>
    <name type="primary">cul-6</name>
    <name type="ORF">K08E7.7</name>
</gene>